<name>NANE_ESCF3</name>
<comment type="function">
    <text evidence="1">Converts N-acetylmannosamine-6-phosphate (ManNAc-6-P) to N-acetylglucosamine-6-phosphate (GlcNAc-6-P).</text>
</comment>
<comment type="catalytic activity">
    <reaction evidence="1">
        <text>an N-acyl-D-glucosamine 6-phosphate = an N-acyl-D-mannosamine 6-phosphate</text>
        <dbReference type="Rhea" id="RHEA:23932"/>
        <dbReference type="ChEBI" id="CHEBI:57599"/>
        <dbReference type="ChEBI" id="CHEBI:57666"/>
        <dbReference type="EC" id="5.1.3.9"/>
    </reaction>
</comment>
<comment type="pathway">
    <text evidence="1">Amino-sugar metabolism; N-acetylneuraminate degradation; D-fructose 6-phosphate from N-acetylneuraminate: step 3/5.</text>
</comment>
<comment type="similarity">
    <text evidence="1">Belongs to the NanE family.</text>
</comment>
<keyword id="KW-0119">Carbohydrate metabolism</keyword>
<keyword id="KW-0413">Isomerase</keyword>
<evidence type="ECO:0000255" key="1">
    <source>
        <dbReference type="HAMAP-Rule" id="MF_01235"/>
    </source>
</evidence>
<proteinExistence type="inferred from homology"/>
<feature type="chain" id="PRO_1000139711" description="Putative N-acetylmannosamine-6-phosphate 2-epimerase">
    <location>
        <begin position="1"/>
        <end position="229"/>
    </location>
</feature>
<protein>
    <recommendedName>
        <fullName evidence="1">Putative N-acetylmannosamine-6-phosphate 2-epimerase</fullName>
        <ecNumber evidence="1">5.1.3.9</ecNumber>
    </recommendedName>
    <alternativeName>
        <fullName evidence="1">ManNAc-6-P epimerase</fullName>
    </alternativeName>
</protein>
<organism>
    <name type="scientific">Escherichia fergusonii (strain ATCC 35469 / DSM 13698 / CCUG 18766 / IAM 14443 / JCM 21226 / LMG 7866 / NBRC 102419 / NCTC 12128 / CDC 0568-73)</name>
    <dbReference type="NCBI Taxonomy" id="585054"/>
    <lineage>
        <taxon>Bacteria</taxon>
        <taxon>Pseudomonadati</taxon>
        <taxon>Pseudomonadota</taxon>
        <taxon>Gammaproteobacteria</taxon>
        <taxon>Enterobacterales</taxon>
        <taxon>Enterobacteriaceae</taxon>
        <taxon>Escherichia</taxon>
    </lineage>
</organism>
<gene>
    <name evidence="1" type="primary">nanE</name>
    <name type="ordered locus">EFER_3194</name>
</gene>
<reference key="1">
    <citation type="journal article" date="2009" name="PLoS Genet.">
        <title>Organised genome dynamics in the Escherichia coli species results in highly diverse adaptive paths.</title>
        <authorList>
            <person name="Touchon M."/>
            <person name="Hoede C."/>
            <person name="Tenaillon O."/>
            <person name="Barbe V."/>
            <person name="Baeriswyl S."/>
            <person name="Bidet P."/>
            <person name="Bingen E."/>
            <person name="Bonacorsi S."/>
            <person name="Bouchier C."/>
            <person name="Bouvet O."/>
            <person name="Calteau A."/>
            <person name="Chiapello H."/>
            <person name="Clermont O."/>
            <person name="Cruveiller S."/>
            <person name="Danchin A."/>
            <person name="Diard M."/>
            <person name="Dossat C."/>
            <person name="Karoui M.E."/>
            <person name="Frapy E."/>
            <person name="Garry L."/>
            <person name="Ghigo J.M."/>
            <person name="Gilles A.M."/>
            <person name="Johnson J."/>
            <person name="Le Bouguenec C."/>
            <person name="Lescat M."/>
            <person name="Mangenot S."/>
            <person name="Martinez-Jehanne V."/>
            <person name="Matic I."/>
            <person name="Nassif X."/>
            <person name="Oztas S."/>
            <person name="Petit M.A."/>
            <person name="Pichon C."/>
            <person name="Rouy Z."/>
            <person name="Ruf C.S."/>
            <person name="Schneider D."/>
            <person name="Tourret J."/>
            <person name="Vacherie B."/>
            <person name="Vallenet D."/>
            <person name="Medigue C."/>
            <person name="Rocha E.P.C."/>
            <person name="Denamur E."/>
        </authorList>
    </citation>
    <scope>NUCLEOTIDE SEQUENCE [LARGE SCALE GENOMIC DNA]</scope>
    <source>
        <strain>ATCC 35469 / DSM 13698 / BCRC 15582 / CCUG 18766 / IAM 14443 / JCM 21226 / LMG 7866 / NBRC 102419 / NCTC 12128 / CDC 0568-73</strain>
    </source>
</reference>
<sequence length="229" mass="24060">MSLLAQLDQKIAANGGLIVSCQPVPDSPLDKPEIVAAMALAAEQAGAVAIRIEGVANLQATRAVVSVPIIGIVKRDLEDSPVRITAYIEDVDALAQAGADIIAIDGTDRPRPVPVETLLARIHHHGLLAMTDCSTPEDGLACQKLGAEIIGTTLSGYTTPETPEEPDLALVKTLSDAGCRVIAEGRYNSPAQAADAMRHGAWAVTVGSAITRLEHICQWYNTAMKKAVL</sequence>
<accession>B7LRJ1</accession>
<dbReference type="EC" id="5.1.3.9" evidence="1"/>
<dbReference type="EMBL" id="CU928158">
    <property type="protein sequence ID" value="CAQ90687.1"/>
    <property type="molecule type" value="Genomic_DNA"/>
</dbReference>
<dbReference type="RefSeq" id="WP_000054238.1">
    <property type="nucleotide sequence ID" value="NC_011740.1"/>
</dbReference>
<dbReference type="SMR" id="B7LRJ1"/>
<dbReference type="KEGG" id="efe:EFER_3194"/>
<dbReference type="HOGENOM" id="CLU_086300_0_0_6"/>
<dbReference type="OrthoDB" id="9810372at2"/>
<dbReference type="UniPathway" id="UPA00629">
    <property type="reaction ID" value="UER00682"/>
</dbReference>
<dbReference type="Proteomes" id="UP000000745">
    <property type="component" value="Chromosome"/>
</dbReference>
<dbReference type="GO" id="GO:0005829">
    <property type="term" value="C:cytosol"/>
    <property type="evidence" value="ECO:0007669"/>
    <property type="project" value="TreeGrafter"/>
</dbReference>
<dbReference type="GO" id="GO:0047465">
    <property type="term" value="F:N-acylglucosamine-6-phosphate 2-epimerase activity"/>
    <property type="evidence" value="ECO:0007669"/>
    <property type="project" value="UniProtKB-EC"/>
</dbReference>
<dbReference type="GO" id="GO:0005975">
    <property type="term" value="P:carbohydrate metabolic process"/>
    <property type="evidence" value="ECO:0007669"/>
    <property type="project" value="UniProtKB-UniRule"/>
</dbReference>
<dbReference type="GO" id="GO:0006053">
    <property type="term" value="P:N-acetylmannosamine catabolic process"/>
    <property type="evidence" value="ECO:0007669"/>
    <property type="project" value="TreeGrafter"/>
</dbReference>
<dbReference type="GO" id="GO:0019262">
    <property type="term" value="P:N-acetylneuraminate catabolic process"/>
    <property type="evidence" value="ECO:0007669"/>
    <property type="project" value="UniProtKB-UniRule"/>
</dbReference>
<dbReference type="CDD" id="cd04729">
    <property type="entry name" value="NanE"/>
    <property type="match status" value="1"/>
</dbReference>
<dbReference type="FunFam" id="3.20.20.70:FF:000035">
    <property type="entry name" value="Putative N-acetylmannosamine-6-phosphate 2-epimerase"/>
    <property type="match status" value="1"/>
</dbReference>
<dbReference type="Gene3D" id="3.20.20.70">
    <property type="entry name" value="Aldolase class I"/>
    <property type="match status" value="1"/>
</dbReference>
<dbReference type="HAMAP" id="MF_01235">
    <property type="entry name" value="ManNAc6P_epimer"/>
    <property type="match status" value="1"/>
</dbReference>
<dbReference type="InterPro" id="IPR013785">
    <property type="entry name" value="Aldolase_TIM"/>
</dbReference>
<dbReference type="InterPro" id="IPR007260">
    <property type="entry name" value="NanE"/>
</dbReference>
<dbReference type="InterPro" id="IPR011060">
    <property type="entry name" value="RibuloseP-bd_barrel"/>
</dbReference>
<dbReference type="NCBIfam" id="NF002231">
    <property type="entry name" value="PRK01130.1"/>
    <property type="match status" value="1"/>
</dbReference>
<dbReference type="PANTHER" id="PTHR36204">
    <property type="entry name" value="N-ACETYLMANNOSAMINE-6-PHOSPHATE 2-EPIMERASE-RELATED"/>
    <property type="match status" value="1"/>
</dbReference>
<dbReference type="PANTHER" id="PTHR36204:SF1">
    <property type="entry name" value="N-ACETYLMANNOSAMINE-6-PHOSPHATE 2-EPIMERASE-RELATED"/>
    <property type="match status" value="1"/>
</dbReference>
<dbReference type="Pfam" id="PF04131">
    <property type="entry name" value="NanE"/>
    <property type="match status" value="1"/>
</dbReference>
<dbReference type="SUPFAM" id="SSF51366">
    <property type="entry name" value="Ribulose-phoshate binding barrel"/>
    <property type="match status" value="1"/>
</dbReference>